<accession>A1E9V9</accession>
<evidence type="ECO:0000255" key="1">
    <source>
        <dbReference type="HAMAP-Rule" id="MF_00075"/>
    </source>
</evidence>
<evidence type="ECO:0000256" key="2">
    <source>
        <dbReference type="SAM" id="MobiDB-lite"/>
    </source>
</evidence>
<geneLocation type="chloroplast"/>
<keyword id="KW-0150">Chloroplast</keyword>
<keyword id="KW-0396">Initiation factor</keyword>
<keyword id="KW-0934">Plastid</keyword>
<keyword id="KW-0648">Protein biosynthesis</keyword>
<keyword id="KW-1185">Reference proteome</keyword>
<keyword id="KW-0694">RNA-binding</keyword>
<keyword id="KW-0699">rRNA-binding</keyword>
<reference key="1">
    <citation type="journal article" date="2007" name="Theor. Appl. Genet.">
        <title>Complete chloroplast genome sequences of Hordeum vulgare, Sorghum bicolor and Agrostis stolonifera, and comparative analyses with other grass genomes.</title>
        <authorList>
            <person name="Saski C."/>
            <person name="Lee S.-B."/>
            <person name="Fjellheim S."/>
            <person name="Guda C."/>
            <person name="Jansen R.K."/>
            <person name="Luo H."/>
            <person name="Tomkins J."/>
            <person name="Rognli O.A."/>
            <person name="Daniell H."/>
            <person name="Clarke J.L."/>
        </authorList>
    </citation>
    <scope>NUCLEOTIDE SEQUENCE [LARGE SCALE GENOMIC DNA]</scope>
    <source>
        <strain>cv. BTx623</strain>
    </source>
</reference>
<gene>
    <name evidence="1" type="primary">infA</name>
</gene>
<proteinExistence type="inferred from homology"/>
<dbReference type="EMBL" id="EF115542">
    <property type="protein sequence ID" value="ABK79530.1"/>
    <property type="molecule type" value="Genomic_DNA"/>
</dbReference>
<dbReference type="RefSeq" id="YP_899442.1">
    <property type="nucleotide sequence ID" value="NC_008602.1"/>
</dbReference>
<dbReference type="SMR" id="A1E9V9"/>
<dbReference type="FunCoup" id="A1E9V9">
    <property type="interactions" value="29"/>
</dbReference>
<dbReference type="STRING" id="4558.A1E9V9"/>
<dbReference type="GeneID" id="4549086"/>
<dbReference type="KEGG" id="sbi:4549086"/>
<dbReference type="InParanoid" id="A1E9V9"/>
<dbReference type="OrthoDB" id="1714886at2759"/>
<dbReference type="Proteomes" id="UP000000768">
    <property type="component" value="Chloroplast"/>
</dbReference>
<dbReference type="GO" id="GO:0009507">
    <property type="term" value="C:chloroplast"/>
    <property type="evidence" value="ECO:0007669"/>
    <property type="project" value="UniProtKB-SubCell"/>
</dbReference>
<dbReference type="GO" id="GO:0005829">
    <property type="term" value="C:cytosol"/>
    <property type="evidence" value="ECO:0000318"/>
    <property type="project" value="GO_Central"/>
</dbReference>
<dbReference type="GO" id="GO:0043022">
    <property type="term" value="F:ribosome binding"/>
    <property type="evidence" value="ECO:0000318"/>
    <property type="project" value="GO_Central"/>
</dbReference>
<dbReference type="GO" id="GO:0019843">
    <property type="term" value="F:rRNA binding"/>
    <property type="evidence" value="ECO:0007669"/>
    <property type="project" value="UniProtKB-UniRule"/>
</dbReference>
<dbReference type="GO" id="GO:0003743">
    <property type="term" value="F:translation initiation factor activity"/>
    <property type="evidence" value="ECO:0007669"/>
    <property type="project" value="UniProtKB-UniRule"/>
</dbReference>
<dbReference type="CDD" id="cd04451">
    <property type="entry name" value="S1_IF1"/>
    <property type="match status" value="1"/>
</dbReference>
<dbReference type="FunFam" id="2.40.50.140:FF:000019">
    <property type="entry name" value="Translation initiation factor IF-1, chloroplastic"/>
    <property type="match status" value="1"/>
</dbReference>
<dbReference type="Gene3D" id="2.40.50.140">
    <property type="entry name" value="Nucleic acid-binding proteins"/>
    <property type="match status" value="1"/>
</dbReference>
<dbReference type="HAMAP" id="MF_00075">
    <property type="entry name" value="IF_1"/>
    <property type="match status" value="1"/>
</dbReference>
<dbReference type="InterPro" id="IPR012340">
    <property type="entry name" value="NA-bd_OB-fold"/>
</dbReference>
<dbReference type="InterPro" id="IPR006196">
    <property type="entry name" value="RNA-binding_domain_S1_IF1"/>
</dbReference>
<dbReference type="InterPro" id="IPR003029">
    <property type="entry name" value="S1_domain"/>
</dbReference>
<dbReference type="InterPro" id="IPR004368">
    <property type="entry name" value="TIF_IF1"/>
</dbReference>
<dbReference type="NCBIfam" id="TIGR00008">
    <property type="entry name" value="infA"/>
    <property type="match status" value="1"/>
</dbReference>
<dbReference type="PANTHER" id="PTHR33370">
    <property type="entry name" value="TRANSLATION INITIATION FACTOR IF-1, CHLOROPLASTIC"/>
    <property type="match status" value="1"/>
</dbReference>
<dbReference type="PANTHER" id="PTHR33370:SF1">
    <property type="entry name" value="TRANSLATION INITIATION FACTOR IF-1, CHLOROPLASTIC"/>
    <property type="match status" value="1"/>
</dbReference>
<dbReference type="Pfam" id="PF01176">
    <property type="entry name" value="eIF-1a"/>
    <property type="match status" value="1"/>
</dbReference>
<dbReference type="SMART" id="SM00316">
    <property type="entry name" value="S1"/>
    <property type="match status" value="1"/>
</dbReference>
<dbReference type="SUPFAM" id="SSF50249">
    <property type="entry name" value="Nucleic acid-binding proteins"/>
    <property type="match status" value="1"/>
</dbReference>
<dbReference type="PROSITE" id="PS50832">
    <property type="entry name" value="S1_IF1_TYPE"/>
    <property type="match status" value="1"/>
</dbReference>
<comment type="function">
    <text evidence="1">One of the essential components for the initiation of protein synthesis. Stabilizes the binding of IF-2 and IF-3 on the 30S subunit to which N-formylmethionyl-tRNA(fMet) subsequently binds. Helps modulate mRNA selection, yielding the 30S pre-initiation complex (PIC). Upon addition of the 50S ribosomal subunit IF-1, IF-2 and IF-3 are released leaving the mature 70S translation initiation complex.</text>
</comment>
<comment type="subunit">
    <text evidence="1">Component of the 30S ribosomal translation pre-initiation complex which assembles on the 30S ribosome in the order IF-2 and IF-3, IF-1 and N-formylmethionyl-tRNA(fMet); mRNA recruitment can occur at any time during PIC assembly.</text>
</comment>
<comment type="subcellular location">
    <subcellularLocation>
        <location evidence="1">Plastid</location>
        <location evidence="1">Chloroplast</location>
    </subcellularLocation>
</comment>
<comment type="similarity">
    <text evidence="1">Belongs to the IF-1 family.</text>
</comment>
<protein>
    <recommendedName>
        <fullName evidence="1">Translation initiation factor IF-1, chloroplastic</fullName>
    </recommendedName>
</protein>
<sequence>MTEKKNRREKKNPREAKVTFEGLVTEALPNGMFRVRLENDTIILGYISGKIRSSSIRILMGDRVKIEVSRYDSSKGRIIYRLPHKDSKRTEDSKDTEDLKDTKDSKD</sequence>
<name>IF1C_SORBI</name>
<organism>
    <name type="scientific">Sorghum bicolor</name>
    <name type="common">Sorghum</name>
    <name type="synonym">Sorghum vulgare</name>
    <dbReference type="NCBI Taxonomy" id="4558"/>
    <lineage>
        <taxon>Eukaryota</taxon>
        <taxon>Viridiplantae</taxon>
        <taxon>Streptophyta</taxon>
        <taxon>Embryophyta</taxon>
        <taxon>Tracheophyta</taxon>
        <taxon>Spermatophyta</taxon>
        <taxon>Magnoliopsida</taxon>
        <taxon>Liliopsida</taxon>
        <taxon>Poales</taxon>
        <taxon>Poaceae</taxon>
        <taxon>PACMAD clade</taxon>
        <taxon>Panicoideae</taxon>
        <taxon>Andropogonodae</taxon>
        <taxon>Andropogoneae</taxon>
        <taxon>Sorghinae</taxon>
        <taxon>Sorghum</taxon>
    </lineage>
</organism>
<feature type="chain" id="PRO_0000275397" description="Translation initiation factor IF-1, chloroplastic">
    <location>
        <begin position="1"/>
        <end position="107"/>
    </location>
</feature>
<feature type="domain" description="S1-like" evidence="1">
    <location>
        <begin position="8"/>
        <end position="83"/>
    </location>
</feature>
<feature type="region of interest" description="Disordered" evidence="2">
    <location>
        <begin position="81"/>
        <end position="107"/>
    </location>
</feature>
<feature type="compositionally biased region" description="Basic and acidic residues" evidence="2">
    <location>
        <begin position="83"/>
        <end position="107"/>
    </location>
</feature>